<sequence length="466" mass="52279">MAALSNLKQCPPFSTLPDLALRHNHIPELERYPQINLNSELLANPAGQRYYGGQSFVSVNEGVLKRIARSFFNGGFWKTLEEARSPETREQAPLIAQAGDLIAQFLGLATGLRILPHTQQLSAERIAQFVETRDWLNSDVRYLAWNQHFFCLAVAGVDDVVRIYTKSSSATTATVLKSPSQTQITCMAWRPLCASEIVIGCRQGLCFWEVDSTLHLGRTNAPSEIFKYPNNLPITSMQWNKDGTQLATASIGDRSIIIWQPDTGMMQPLKRLGPPGSLLKWSPDNDWLFAATVDRVFRVWNCHQQWTTERWVCGPGGYVQTACWSPCGRFLLFVSSAEPILYRLQFVQQSLLSSSADEKEILPIADLNACSIDANRTLVGGPAQQLAWDPHGNYLVVTFKATNCIAVFRTFIQKFDLQISAAYYLSGETAAEHPSFICFQPLYEDNDRSVLTIAWSSGRIQYYAFD</sequence>
<proteinExistence type="evidence at transcript level"/>
<evidence type="ECO:0000250" key="1">
    <source>
        <dbReference type="UniProtKB" id="Q9NRG9"/>
    </source>
</evidence>
<evidence type="ECO:0000255" key="2"/>
<evidence type="ECO:0000269" key="3">
    <source>
    </source>
</evidence>
<evidence type="ECO:0000303" key="4">
    <source>
    </source>
</evidence>
<evidence type="ECO:0000305" key="5"/>
<evidence type="ECO:0000312" key="6">
    <source>
        <dbReference type="EMBL" id="AAK93382.1"/>
    </source>
</evidence>
<evidence type="ECO:0000312" key="7">
    <source>
        <dbReference type="EMBL" id="ADJ37240.1"/>
    </source>
</evidence>
<evidence type="ECO:0000312" key="8">
    <source>
        <dbReference type="FlyBase" id="FBgn0030122"/>
    </source>
</evidence>
<evidence type="ECO:0000312" key="9">
    <source>
        <dbReference type="Proteomes" id="UP000000803"/>
    </source>
</evidence>
<protein>
    <recommendedName>
        <fullName evidence="4 8">Aladin</fullName>
    </recommendedName>
</protein>
<keyword id="KW-0963">Cytoplasm</keyword>
<keyword id="KW-0206">Cytoskeleton</keyword>
<keyword id="KW-0509">mRNA transport</keyword>
<keyword id="KW-0906">Nuclear pore complex</keyword>
<keyword id="KW-0539">Nucleus</keyword>
<keyword id="KW-0653">Protein transport</keyword>
<keyword id="KW-1185">Reference proteome</keyword>
<keyword id="KW-0677">Repeat</keyword>
<keyword id="KW-0811">Translocation</keyword>
<keyword id="KW-0813">Transport</keyword>
<keyword id="KW-0853">WD repeat</keyword>
<feature type="chain" id="PRO_0000447261" description="Aladin">
    <location>
        <begin position="1"/>
        <end position="466"/>
    </location>
</feature>
<feature type="repeat" description="WD 1" evidence="2">
    <location>
        <begin position="135"/>
        <end position="174"/>
    </location>
</feature>
<feature type="repeat" description="WD 2" evidence="2">
    <location>
        <begin position="179"/>
        <end position="218"/>
    </location>
</feature>
<feature type="repeat" description="WD 3" evidence="2">
    <location>
        <begin position="229"/>
        <end position="269"/>
    </location>
</feature>
<feature type="repeat" description="WD 4" evidence="2">
    <location>
        <begin position="271"/>
        <end position="310"/>
    </location>
</feature>
<feature type="repeat" description="WD 5" evidence="2">
    <location>
        <begin position="378"/>
        <end position="418"/>
    </location>
</feature>
<accession>Q9W351</accession>
<dbReference type="EMBL" id="AE014298">
    <property type="protein sequence ID" value="AAF46484.1"/>
    <property type="molecule type" value="Genomic_DNA"/>
</dbReference>
<dbReference type="EMBL" id="AE014298">
    <property type="protein sequence ID" value="AHN59520.1"/>
    <property type="molecule type" value="Genomic_DNA"/>
</dbReference>
<dbReference type="EMBL" id="AY051958">
    <property type="protein sequence ID" value="AAK93382.1"/>
    <property type="molecule type" value="mRNA"/>
</dbReference>
<dbReference type="EMBL" id="BT125044">
    <property type="protein sequence ID" value="ADJ37240.1"/>
    <property type="molecule type" value="mRNA"/>
</dbReference>
<dbReference type="RefSeq" id="NP_001285049.1">
    <property type="nucleotide sequence ID" value="NM_001298120.1"/>
</dbReference>
<dbReference type="RefSeq" id="NP_572557.1">
    <property type="nucleotide sequence ID" value="NM_132329.4"/>
</dbReference>
<dbReference type="SMR" id="Q9W351"/>
<dbReference type="ComplexPortal" id="CPX-2568">
    <property type="entry name" value="Nuclear pore complex"/>
</dbReference>
<dbReference type="FunCoup" id="Q9W351">
    <property type="interactions" value="1825"/>
</dbReference>
<dbReference type="IntAct" id="Q9W351">
    <property type="interactions" value="7"/>
</dbReference>
<dbReference type="STRING" id="7227.FBpp0308972"/>
<dbReference type="PaxDb" id="7227-FBpp0071254"/>
<dbReference type="DNASU" id="31881"/>
<dbReference type="EnsemblMetazoa" id="FBtr0071319">
    <property type="protein sequence ID" value="FBpp0071254"/>
    <property type="gene ID" value="FBgn0030122"/>
</dbReference>
<dbReference type="EnsemblMetazoa" id="FBtr0339949">
    <property type="protein sequence ID" value="FBpp0308972"/>
    <property type="gene ID" value="FBgn0030122"/>
</dbReference>
<dbReference type="GeneID" id="31881"/>
<dbReference type="KEGG" id="dme:Dmel_CG16892"/>
<dbReference type="UCSC" id="CG16892-RA">
    <property type="organism name" value="d. melanogaster"/>
</dbReference>
<dbReference type="AGR" id="FB:FBgn0030122"/>
<dbReference type="CTD" id="31881"/>
<dbReference type="FlyBase" id="FBgn0030122">
    <property type="gene designation" value="Aladin"/>
</dbReference>
<dbReference type="VEuPathDB" id="VectorBase:FBgn0030122"/>
<dbReference type="eggNOG" id="KOG2139">
    <property type="taxonomic scope" value="Eukaryota"/>
</dbReference>
<dbReference type="GeneTree" id="ENSGT00390000009446"/>
<dbReference type="HOGENOM" id="CLU_027691_0_1_1"/>
<dbReference type="InParanoid" id="Q9W351"/>
<dbReference type="OMA" id="FQPLYKD"/>
<dbReference type="OrthoDB" id="411991at2759"/>
<dbReference type="PhylomeDB" id="Q9W351"/>
<dbReference type="Reactome" id="R-DME-159227">
    <property type="pathway name" value="Transport of the SLBP independent Mature mRNA"/>
</dbReference>
<dbReference type="Reactome" id="R-DME-159230">
    <property type="pathway name" value="Transport of the SLBP Dependant Mature mRNA"/>
</dbReference>
<dbReference type="Reactome" id="R-DME-159231">
    <property type="pathway name" value="Transport of Mature mRNA Derived from an Intronless Transcript"/>
</dbReference>
<dbReference type="Reactome" id="R-DME-159236">
    <property type="pathway name" value="Transport of Mature mRNA derived from an Intron-Containing Transcript"/>
</dbReference>
<dbReference type="Reactome" id="R-DME-3108214">
    <property type="pathway name" value="SUMOylation of DNA damage response and repair proteins"/>
</dbReference>
<dbReference type="Reactome" id="R-DME-3301854">
    <property type="pathway name" value="Nuclear Pore Complex (NPC) Disassembly"/>
</dbReference>
<dbReference type="Reactome" id="R-DME-4085377">
    <property type="pathway name" value="SUMOylation of SUMOylation proteins"/>
</dbReference>
<dbReference type="Reactome" id="R-DME-4551638">
    <property type="pathway name" value="SUMOylation of chromatin organization proteins"/>
</dbReference>
<dbReference type="Reactome" id="R-DME-4615885">
    <property type="pathway name" value="SUMOylation of DNA replication proteins"/>
</dbReference>
<dbReference type="Reactome" id="R-DME-5578749">
    <property type="pathway name" value="Transcriptional regulation by small RNAs"/>
</dbReference>
<dbReference type="Reactome" id="R-DME-8980692">
    <property type="pathway name" value="RHOA GTPase cycle"/>
</dbReference>
<dbReference type="BioGRID-ORCS" id="31881">
    <property type="hits" value="0 hits in 1 CRISPR screen"/>
</dbReference>
<dbReference type="GenomeRNAi" id="31881"/>
<dbReference type="PRO" id="PR:Q9W351"/>
<dbReference type="Proteomes" id="UP000000803">
    <property type="component" value="Chromosome X"/>
</dbReference>
<dbReference type="Bgee" id="FBgn0030122">
    <property type="expression patterns" value="Expressed in ovarian sheath cell (Drosophila) in ovary and 28 other cell types or tissues"/>
</dbReference>
<dbReference type="GO" id="GO:0005737">
    <property type="term" value="C:cytoplasm"/>
    <property type="evidence" value="ECO:0007669"/>
    <property type="project" value="UniProtKB-KW"/>
</dbReference>
<dbReference type="GO" id="GO:0012505">
    <property type="term" value="C:endomembrane system"/>
    <property type="evidence" value="ECO:0007005"/>
    <property type="project" value="FlyBase"/>
</dbReference>
<dbReference type="GO" id="GO:0072686">
    <property type="term" value="C:mitotic spindle"/>
    <property type="evidence" value="ECO:0000314"/>
    <property type="project" value="UniProtKB"/>
</dbReference>
<dbReference type="GO" id="GO:0005643">
    <property type="term" value="C:nuclear pore"/>
    <property type="evidence" value="ECO:0000250"/>
    <property type="project" value="FlyBase"/>
</dbReference>
<dbReference type="GO" id="GO:0000922">
    <property type="term" value="C:spindle pole"/>
    <property type="evidence" value="ECO:0000314"/>
    <property type="project" value="UniProtKB"/>
</dbReference>
<dbReference type="GO" id="GO:0001578">
    <property type="term" value="P:microtubule bundle formation"/>
    <property type="evidence" value="ECO:0000315"/>
    <property type="project" value="UniProtKB"/>
</dbReference>
<dbReference type="GO" id="GO:0090307">
    <property type="term" value="P:mitotic spindle assembly"/>
    <property type="evidence" value="ECO:0000315"/>
    <property type="project" value="UniProtKB"/>
</dbReference>
<dbReference type="GO" id="GO:0051028">
    <property type="term" value="P:mRNA transport"/>
    <property type="evidence" value="ECO:0007669"/>
    <property type="project" value="UniProtKB-KW"/>
</dbReference>
<dbReference type="GO" id="GO:0006913">
    <property type="term" value="P:nucleocytoplasmic transport"/>
    <property type="evidence" value="ECO:0000250"/>
    <property type="project" value="FlyBase"/>
</dbReference>
<dbReference type="GO" id="GO:1902365">
    <property type="term" value="P:positive regulation of protein localization to spindle pole body"/>
    <property type="evidence" value="ECO:0000315"/>
    <property type="project" value="UniProtKB"/>
</dbReference>
<dbReference type="GO" id="GO:0015031">
    <property type="term" value="P:protein transport"/>
    <property type="evidence" value="ECO:0007669"/>
    <property type="project" value="UniProtKB-KW"/>
</dbReference>
<dbReference type="Gene3D" id="2.130.10.10">
    <property type="entry name" value="YVTN repeat-like/Quinoprotein amine dehydrogenase"/>
    <property type="match status" value="2"/>
</dbReference>
<dbReference type="InterPro" id="IPR045139">
    <property type="entry name" value="Aladin"/>
</dbReference>
<dbReference type="InterPro" id="IPR015943">
    <property type="entry name" value="WD40/YVTN_repeat-like_dom_sf"/>
</dbReference>
<dbReference type="InterPro" id="IPR001680">
    <property type="entry name" value="WD40_rpt"/>
</dbReference>
<dbReference type="PANTHER" id="PTHR14494:SF0">
    <property type="entry name" value="ALADIN"/>
    <property type="match status" value="1"/>
</dbReference>
<dbReference type="PANTHER" id="PTHR14494">
    <property type="entry name" value="ALADIN/ADRACALIN/AAAS"/>
    <property type="match status" value="1"/>
</dbReference>
<dbReference type="Pfam" id="PF25460">
    <property type="entry name" value="Beta-prop_Aladin"/>
    <property type="match status" value="1"/>
</dbReference>
<dbReference type="SMART" id="SM00320">
    <property type="entry name" value="WD40"/>
    <property type="match status" value="5"/>
</dbReference>
<dbReference type="SUPFAM" id="SSF101908">
    <property type="entry name" value="Putative isomerase YbhE"/>
    <property type="match status" value="1"/>
</dbReference>
<organism evidence="9">
    <name type="scientific">Drosophila melanogaster</name>
    <name type="common">Fruit fly</name>
    <dbReference type="NCBI Taxonomy" id="7227"/>
    <lineage>
        <taxon>Eukaryota</taxon>
        <taxon>Metazoa</taxon>
        <taxon>Ecdysozoa</taxon>
        <taxon>Arthropoda</taxon>
        <taxon>Hexapoda</taxon>
        <taxon>Insecta</taxon>
        <taxon>Pterygota</taxon>
        <taxon>Neoptera</taxon>
        <taxon>Endopterygota</taxon>
        <taxon>Diptera</taxon>
        <taxon>Brachycera</taxon>
        <taxon>Muscomorpha</taxon>
        <taxon>Ephydroidea</taxon>
        <taxon>Drosophilidae</taxon>
        <taxon>Drosophila</taxon>
        <taxon>Sophophora</taxon>
    </lineage>
</organism>
<gene>
    <name evidence="4 8" type="primary">Aladin</name>
    <name evidence="8" type="ORF">CG16892</name>
</gene>
<reference evidence="9" key="1">
    <citation type="journal article" date="2000" name="Science">
        <title>The genome sequence of Drosophila melanogaster.</title>
        <authorList>
            <person name="Adams M.D."/>
            <person name="Celniker S.E."/>
            <person name="Holt R.A."/>
            <person name="Evans C.A."/>
            <person name="Gocayne J.D."/>
            <person name="Amanatides P.G."/>
            <person name="Scherer S.E."/>
            <person name="Li P.W."/>
            <person name="Hoskins R.A."/>
            <person name="Galle R.F."/>
            <person name="George R.A."/>
            <person name="Lewis S.E."/>
            <person name="Richards S."/>
            <person name="Ashburner M."/>
            <person name="Henderson S.N."/>
            <person name="Sutton G.G."/>
            <person name="Wortman J.R."/>
            <person name="Yandell M.D."/>
            <person name="Zhang Q."/>
            <person name="Chen L.X."/>
            <person name="Brandon R.C."/>
            <person name="Rogers Y.-H.C."/>
            <person name="Blazej R.G."/>
            <person name="Champe M."/>
            <person name="Pfeiffer B.D."/>
            <person name="Wan K.H."/>
            <person name="Doyle C."/>
            <person name="Baxter E.G."/>
            <person name="Helt G."/>
            <person name="Nelson C.R."/>
            <person name="Miklos G.L.G."/>
            <person name="Abril J.F."/>
            <person name="Agbayani A."/>
            <person name="An H.-J."/>
            <person name="Andrews-Pfannkoch C."/>
            <person name="Baldwin D."/>
            <person name="Ballew R.M."/>
            <person name="Basu A."/>
            <person name="Baxendale J."/>
            <person name="Bayraktaroglu L."/>
            <person name="Beasley E.M."/>
            <person name="Beeson K.Y."/>
            <person name="Benos P.V."/>
            <person name="Berman B.P."/>
            <person name="Bhandari D."/>
            <person name="Bolshakov S."/>
            <person name="Borkova D."/>
            <person name="Botchan M.R."/>
            <person name="Bouck J."/>
            <person name="Brokstein P."/>
            <person name="Brottier P."/>
            <person name="Burtis K.C."/>
            <person name="Busam D.A."/>
            <person name="Butler H."/>
            <person name="Cadieu E."/>
            <person name="Center A."/>
            <person name="Chandra I."/>
            <person name="Cherry J.M."/>
            <person name="Cawley S."/>
            <person name="Dahlke C."/>
            <person name="Davenport L.B."/>
            <person name="Davies P."/>
            <person name="de Pablos B."/>
            <person name="Delcher A."/>
            <person name="Deng Z."/>
            <person name="Mays A.D."/>
            <person name="Dew I."/>
            <person name="Dietz S.M."/>
            <person name="Dodson K."/>
            <person name="Doup L.E."/>
            <person name="Downes M."/>
            <person name="Dugan-Rocha S."/>
            <person name="Dunkov B.C."/>
            <person name="Dunn P."/>
            <person name="Durbin K.J."/>
            <person name="Evangelista C.C."/>
            <person name="Ferraz C."/>
            <person name="Ferriera S."/>
            <person name="Fleischmann W."/>
            <person name="Fosler C."/>
            <person name="Gabrielian A.E."/>
            <person name="Garg N.S."/>
            <person name="Gelbart W.M."/>
            <person name="Glasser K."/>
            <person name="Glodek A."/>
            <person name="Gong F."/>
            <person name="Gorrell J.H."/>
            <person name="Gu Z."/>
            <person name="Guan P."/>
            <person name="Harris M."/>
            <person name="Harris N.L."/>
            <person name="Harvey D.A."/>
            <person name="Heiman T.J."/>
            <person name="Hernandez J.R."/>
            <person name="Houck J."/>
            <person name="Hostin D."/>
            <person name="Houston K.A."/>
            <person name="Howland T.J."/>
            <person name="Wei M.-H."/>
            <person name="Ibegwam C."/>
            <person name="Jalali M."/>
            <person name="Kalush F."/>
            <person name="Karpen G.H."/>
            <person name="Ke Z."/>
            <person name="Kennison J.A."/>
            <person name="Ketchum K.A."/>
            <person name="Kimmel B.E."/>
            <person name="Kodira C.D."/>
            <person name="Kraft C.L."/>
            <person name="Kravitz S."/>
            <person name="Kulp D."/>
            <person name="Lai Z."/>
            <person name="Lasko P."/>
            <person name="Lei Y."/>
            <person name="Levitsky A.A."/>
            <person name="Li J.H."/>
            <person name="Li Z."/>
            <person name="Liang Y."/>
            <person name="Lin X."/>
            <person name="Liu X."/>
            <person name="Mattei B."/>
            <person name="McIntosh T.C."/>
            <person name="McLeod M.P."/>
            <person name="McPherson D."/>
            <person name="Merkulov G."/>
            <person name="Milshina N.V."/>
            <person name="Mobarry C."/>
            <person name="Morris J."/>
            <person name="Moshrefi A."/>
            <person name="Mount S.M."/>
            <person name="Moy M."/>
            <person name="Murphy B."/>
            <person name="Murphy L."/>
            <person name="Muzny D.M."/>
            <person name="Nelson D.L."/>
            <person name="Nelson D.R."/>
            <person name="Nelson K.A."/>
            <person name="Nixon K."/>
            <person name="Nusskern D.R."/>
            <person name="Pacleb J.M."/>
            <person name="Palazzolo M."/>
            <person name="Pittman G.S."/>
            <person name="Pan S."/>
            <person name="Pollard J."/>
            <person name="Puri V."/>
            <person name="Reese M.G."/>
            <person name="Reinert K."/>
            <person name="Remington K."/>
            <person name="Saunders R.D.C."/>
            <person name="Scheeler F."/>
            <person name="Shen H."/>
            <person name="Shue B.C."/>
            <person name="Siden-Kiamos I."/>
            <person name="Simpson M."/>
            <person name="Skupski M.P."/>
            <person name="Smith T.J."/>
            <person name="Spier E."/>
            <person name="Spradling A.C."/>
            <person name="Stapleton M."/>
            <person name="Strong R."/>
            <person name="Sun E."/>
            <person name="Svirskas R."/>
            <person name="Tector C."/>
            <person name="Turner R."/>
            <person name="Venter E."/>
            <person name="Wang A.H."/>
            <person name="Wang X."/>
            <person name="Wang Z.-Y."/>
            <person name="Wassarman D.A."/>
            <person name="Weinstock G.M."/>
            <person name="Weissenbach J."/>
            <person name="Williams S.M."/>
            <person name="Woodage T."/>
            <person name="Worley K.C."/>
            <person name="Wu D."/>
            <person name="Yang S."/>
            <person name="Yao Q.A."/>
            <person name="Ye J."/>
            <person name="Yeh R.-F."/>
            <person name="Zaveri J.S."/>
            <person name="Zhan M."/>
            <person name="Zhang G."/>
            <person name="Zhao Q."/>
            <person name="Zheng L."/>
            <person name="Zheng X.H."/>
            <person name="Zhong F.N."/>
            <person name="Zhong W."/>
            <person name="Zhou X."/>
            <person name="Zhu S.C."/>
            <person name="Zhu X."/>
            <person name="Smith H.O."/>
            <person name="Gibbs R.A."/>
            <person name="Myers E.W."/>
            <person name="Rubin G.M."/>
            <person name="Venter J.C."/>
        </authorList>
    </citation>
    <scope>NUCLEOTIDE SEQUENCE [LARGE SCALE GENOMIC DNA]</scope>
    <source>
        <strain evidence="9">Berkeley</strain>
    </source>
</reference>
<reference evidence="9" key="2">
    <citation type="journal article" date="2002" name="Genome Biol.">
        <title>Annotation of the Drosophila melanogaster euchromatic genome: a systematic review.</title>
        <authorList>
            <person name="Misra S."/>
            <person name="Crosby M.A."/>
            <person name="Mungall C.J."/>
            <person name="Matthews B.B."/>
            <person name="Campbell K.S."/>
            <person name="Hradecky P."/>
            <person name="Huang Y."/>
            <person name="Kaminker J.S."/>
            <person name="Millburn G.H."/>
            <person name="Prochnik S.E."/>
            <person name="Smith C.D."/>
            <person name="Tupy J.L."/>
            <person name="Whitfield E.J."/>
            <person name="Bayraktaroglu L."/>
            <person name="Berman B.P."/>
            <person name="Bettencourt B.R."/>
            <person name="Celniker S.E."/>
            <person name="de Grey A.D.N.J."/>
            <person name="Drysdale R.A."/>
            <person name="Harris N.L."/>
            <person name="Richter J."/>
            <person name="Russo S."/>
            <person name="Schroeder A.J."/>
            <person name="Shu S.Q."/>
            <person name="Stapleton M."/>
            <person name="Yamada C."/>
            <person name="Ashburner M."/>
            <person name="Gelbart W.M."/>
            <person name="Rubin G.M."/>
            <person name="Lewis S.E."/>
        </authorList>
    </citation>
    <scope>GENOME REANNOTATION</scope>
    <source>
        <strain evidence="9">Berkeley</strain>
    </source>
</reference>
<reference evidence="6" key="3">
    <citation type="journal article" date="2002" name="Genome Biol.">
        <title>A Drosophila full-length cDNA resource.</title>
        <authorList>
            <person name="Stapleton M."/>
            <person name="Carlson J.W."/>
            <person name="Brokstein P."/>
            <person name="Yu C."/>
            <person name="Champe M."/>
            <person name="George R.A."/>
            <person name="Guarin H."/>
            <person name="Kronmiller B."/>
            <person name="Pacleb J.M."/>
            <person name="Park S."/>
            <person name="Wan K.H."/>
            <person name="Rubin G.M."/>
            <person name="Celniker S.E."/>
        </authorList>
    </citation>
    <scope>NUCLEOTIDE SEQUENCE [LARGE SCALE MRNA]</scope>
    <source>
        <strain evidence="6">Berkeley</strain>
        <tissue evidence="6">Embryo</tissue>
    </source>
</reference>
<reference evidence="7" key="4">
    <citation type="submission" date="2010-06" db="EMBL/GenBank/DDBJ databases">
        <authorList>
            <person name="Carlson J."/>
            <person name="Booth B."/>
            <person name="Frise E."/>
            <person name="Sandler J."/>
            <person name="Wan K."/>
            <person name="Yu C."/>
            <person name="Celniker S."/>
        </authorList>
    </citation>
    <scope>NUCLEOTIDE SEQUENCE [LARGE SCALE MRNA]</scope>
</reference>
<reference evidence="5" key="5">
    <citation type="journal article" date="2015" name="Mol. Biol. Cell">
        <title>The nucleoporin ALADIN regulates Aurora A localization to ensure robust mitotic spindle formation.</title>
        <authorList>
            <person name="Carvalhal S."/>
            <person name="Ribeiro S.A."/>
            <person name="Arocena M."/>
            <person name="Kasciukovic T."/>
            <person name="Temme A."/>
            <person name="Koehler K."/>
            <person name="Huebner A."/>
            <person name="Griffis E.R."/>
        </authorList>
    </citation>
    <scope>FUNCTION</scope>
    <scope>SUBCELLULAR LOCATION</scope>
</reference>
<comment type="function">
    <text evidence="3">Involved in mitotic spindle assembly.</text>
</comment>
<comment type="subcellular location">
    <subcellularLocation>
        <location evidence="1">Nucleus</location>
        <location evidence="1">Nuclear pore complex</location>
    </subcellularLocation>
    <subcellularLocation>
        <location evidence="3">Cytoplasm</location>
        <location evidence="3">Cytoskeleton</location>
        <location evidence="3">Spindle</location>
    </subcellularLocation>
    <text evidence="3">During mitosis localizes throughout the spindle, is excluded from chromatin, and is enriched on the nuclear envelope remnants that surround the spindle. Present in a ring that surrounds the centrosome in prometaphase and metaphase cells.</text>
</comment>
<name>AAAS_DROME</name>